<organism>
    <name type="scientific">Burkholderia cenocepacia (strain HI2424)</name>
    <dbReference type="NCBI Taxonomy" id="331272"/>
    <lineage>
        <taxon>Bacteria</taxon>
        <taxon>Pseudomonadati</taxon>
        <taxon>Pseudomonadota</taxon>
        <taxon>Betaproteobacteria</taxon>
        <taxon>Burkholderiales</taxon>
        <taxon>Burkholderiaceae</taxon>
        <taxon>Burkholderia</taxon>
        <taxon>Burkholderia cepacia complex</taxon>
    </lineage>
</organism>
<evidence type="ECO:0000255" key="1">
    <source>
        <dbReference type="HAMAP-Rule" id="MF_00747"/>
    </source>
</evidence>
<gene>
    <name evidence="1" type="primary">aceK</name>
    <name type="ordered locus">Bcen2424_2926</name>
</gene>
<sequence length="605" mass="69950">MNHFPKLLSSQIGFDVAQTMLEYFDRHYRIFREAAVDAKTLFERGDWHGLQRLARERITSYDERVKECVEVLEDEYDAENIDDEVWQQIKLHYIGLLTSHRQPECAETFFNSVCCKILHRSYFSNDFIFVRPAISTEYLENDEPAAKPTYRAYYPGTDGLAVTLERIVTNFQLDPPFEDLTRDIGCVMQAIDDEFGHFDEAPNFQIHVLSSLFFRNKSAYIVGRIINADRVLPFAVPIRHVRPGVLALDTVLLRRDLLQIIFSFSHSYFLVDMGVPSAYVDFLCTIMPGKPKAEIYTSVGLQKQGKNLFYRDLLHHLSHSSDRFIIAPGIKGLVMLVFTLPSFPYVFKIIKDHFPPPKETTRAQIMEKYQLVKRHDRLGRMADTLEYSSVALPLARLDHALVRELEKEVPSLLEYEDDKLVIKHLYIERRMTPLNLYLQNGSDADVEHGVKEYGNAVKELMKANIFPGDMLYKNFGVTRHGRVVFYDYDEIEYLTDCNVRRVPPPRNEEDELSGEPWYTVGPHDIFPETYGPFLLGDPRVRSVFMKHHADFFDPALWQASKDKLMQGELPDFYPYDATLRFSVRYPARFGATGENDGAGDAQRAA</sequence>
<name>ACEK_BURCH</name>
<feature type="chain" id="PRO_0000288283" description="Isocitrate dehydrogenase kinase/phosphatase">
    <location>
        <begin position="1"/>
        <end position="605"/>
    </location>
</feature>
<feature type="active site" evidence="1">
    <location>
        <position position="383"/>
    </location>
</feature>
<feature type="binding site" evidence="1">
    <location>
        <begin position="327"/>
        <end position="333"/>
    </location>
    <ligand>
        <name>ATP</name>
        <dbReference type="ChEBI" id="CHEBI:30616"/>
    </ligand>
</feature>
<feature type="binding site" evidence="1">
    <location>
        <position position="348"/>
    </location>
    <ligand>
        <name>ATP</name>
        <dbReference type="ChEBI" id="CHEBI:30616"/>
    </ligand>
</feature>
<keyword id="KW-0067">ATP-binding</keyword>
<keyword id="KW-0963">Cytoplasm</keyword>
<keyword id="KW-0329">Glyoxylate bypass</keyword>
<keyword id="KW-0378">Hydrolase</keyword>
<keyword id="KW-0418">Kinase</keyword>
<keyword id="KW-0547">Nucleotide-binding</keyword>
<keyword id="KW-0904">Protein phosphatase</keyword>
<keyword id="KW-0723">Serine/threonine-protein kinase</keyword>
<keyword id="KW-0808">Transferase</keyword>
<keyword id="KW-0816">Tricarboxylic acid cycle</keyword>
<protein>
    <recommendedName>
        <fullName evidence="1">Isocitrate dehydrogenase kinase/phosphatase</fullName>
        <shortName evidence="1">IDH kinase/phosphatase</shortName>
        <shortName evidence="1">IDHK/P</shortName>
        <ecNumber evidence="1">2.7.11.5</ecNumber>
        <ecNumber evidence="1">3.1.3.-</ecNumber>
    </recommendedName>
</protein>
<comment type="function">
    <text evidence="1">Bifunctional enzyme which can phosphorylate or dephosphorylate isocitrate dehydrogenase (IDH) on a specific serine residue. This is a regulatory mechanism which enables bacteria to bypass the Krebs cycle via the glyoxylate shunt in response to the source of carbon. When bacteria are grown on glucose, IDH is fully active and unphosphorylated, but when grown on acetate or ethanol, the activity of IDH declines drastically concomitant with its phosphorylation.</text>
</comment>
<comment type="catalytic activity">
    <reaction evidence="1">
        <text>L-seryl-[isocitrate dehydrogenase] + ATP = O-phospho-L-seryl-[isocitrate dehydrogenase] + ADP + H(+)</text>
        <dbReference type="Rhea" id="RHEA:43540"/>
        <dbReference type="Rhea" id="RHEA-COMP:10605"/>
        <dbReference type="Rhea" id="RHEA-COMP:10606"/>
        <dbReference type="ChEBI" id="CHEBI:15378"/>
        <dbReference type="ChEBI" id="CHEBI:29999"/>
        <dbReference type="ChEBI" id="CHEBI:30616"/>
        <dbReference type="ChEBI" id="CHEBI:83421"/>
        <dbReference type="ChEBI" id="CHEBI:456216"/>
        <dbReference type="EC" id="2.7.11.5"/>
    </reaction>
</comment>
<comment type="subcellular location">
    <subcellularLocation>
        <location evidence="1">Cytoplasm</location>
    </subcellularLocation>
</comment>
<comment type="similarity">
    <text evidence="1">Belongs to the AceK family.</text>
</comment>
<proteinExistence type="inferred from homology"/>
<dbReference type="EC" id="2.7.11.5" evidence="1"/>
<dbReference type="EC" id="3.1.3.-" evidence="1"/>
<dbReference type="EMBL" id="CP000458">
    <property type="protein sequence ID" value="ABK09674.1"/>
    <property type="molecule type" value="Genomic_DNA"/>
</dbReference>
<dbReference type="RefSeq" id="WP_011546333.1">
    <property type="nucleotide sequence ID" value="NC_008542.1"/>
</dbReference>
<dbReference type="SMR" id="A0KAZ7"/>
<dbReference type="KEGG" id="bch:Bcen2424_2926"/>
<dbReference type="HOGENOM" id="CLU_033804_1_1_4"/>
<dbReference type="GO" id="GO:0005737">
    <property type="term" value="C:cytoplasm"/>
    <property type="evidence" value="ECO:0007669"/>
    <property type="project" value="UniProtKB-SubCell"/>
</dbReference>
<dbReference type="GO" id="GO:0008772">
    <property type="term" value="F:[isocitrate dehydrogenase (NADP+)] kinase activity"/>
    <property type="evidence" value="ECO:0007669"/>
    <property type="project" value="UniProtKB-UniRule"/>
</dbReference>
<dbReference type="GO" id="GO:0016208">
    <property type="term" value="F:AMP binding"/>
    <property type="evidence" value="ECO:0007669"/>
    <property type="project" value="TreeGrafter"/>
</dbReference>
<dbReference type="GO" id="GO:0005524">
    <property type="term" value="F:ATP binding"/>
    <property type="evidence" value="ECO:0007669"/>
    <property type="project" value="UniProtKB-UniRule"/>
</dbReference>
<dbReference type="GO" id="GO:0004721">
    <property type="term" value="F:phosphoprotein phosphatase activity"/>
    <property type="evidence" value="ECO:0007669"/>
    <property type="project" value="UniProtKB-KW"/>
</dbReference>
<dbReference type="GO" id="GO:0004674">
    <property type="term" value="F:protein serine/threonine kinase activity"/>
    <property type="evidence" value="ECO:0007669"/>
    <property type="project" value="UniProtKB-KW"/>
</dbReference>
<dbReference type="GO" id="GO:0006006">
    <property type="term" value="P:glucose metabolic process"/>
    <property type="evidence" value="ECO:0007669"/>
    <property type="project" value="InterPro"/>
</dbReference>
<dbReference type="GO" id="GO:0006097">
    <property type="term" value="P:glyoxylate cycle"/>
    <property type="evidence" value="ECO:0007669"/>
    <property type="project" value="UniProtKB-UniRule"/>
</dbReference>
<dbReference type="GO" id="GO:0006099">
    <property type="term" value="P:tricarboxylic acid cycle"/>
    <property type="evidence" value="ECO:0007669"/>
    <property type="project" value="UniProtKB-UniRule"/>
</dbReference>
<dbReference type="HAMAP" id="MF_00747">
    <property type="entry name" value="AceK"/>
    <property type="match status" value="1"/>
</dbReference>
<dbReference type="InterPro" id="IPR046855">
    <property type="entry name" value="AceK_kinase"/>
</dbReference>
<dbReference type="InterPro" id="IPR046854">
    <property type="entry name" value="AceK_regulatory"/>
</dbReference>
<dbReference type="InterPro" id="IPR010452">
    <property type="entry name" value="Isocitrate_DH_AceK"/>
</dbReference>
<dbReference type="NCBIfam" id="NF002804">
    <property type="entry name" value="PRK02946.1"/>
    <property type="match status" value="1"/>
</dbReference>
<dbReference type="PANTHER" id="PTHR39559">
    <property type="match status" value="1"/>
</dbReference>
<dbReference type="PANTHER" id="PTHR39559:SF1">
    <property type="entry name" value="ISOCITRATE DEHYDROGENASE KINASE_PHOSPHATASE"/>
    <property type="match status" value="1"/>
</dbReference>
<dbReference type="Pfam" id="PF06315">
    <property type="entry name" value="AceK_kinase"/>
    <property type="match status" value="1"/>
</dbReference>
<dbReference type="Pfam" id="PF20423">
    <property type="entry name" value="AceK_regulatory"/>
    <property type="match status" value="1"/>
</dbReference>
<dbReference type="PIRSF" id="PIRSF000719">
    <property type="entry name" value="AceK"/>
    <property type="match status" value="1"/>
</dbReference>
<reference key="1">
    <citation type="submission" date="2006-08" db="EMBL/GenBank/DDBJ databases">
        <title>Complete sequence of chromosome 1 of Burkholderia cenocepacia HI2424.</title>
        <authorList>
            <person name="Copeland A."/>
            <person name="Lucas S."/>
            <person name="Lapidus A."/>
            <person name="Barry K."/>
            <person name="Detter J.C."/>
            <person name="Glavina del Rio T."/>
            <person name="Hammon N."/>
            <person name="Israni S."/>
            <person name="Pitluck S."/>
            <person name="Chain P."/>
            <person name="Malfatti S."/>
            <person name="Shin M."/>
            <person name="Vergez L."/>
            <person name="Schmutz J."/>
            <person name="Larimer F."/>
            <person name="Land M."/>
            <person name="Hauser L."/>
            <person name="Kyrpides N."/>
            <person name="Kim E."/>
            <person name="LiPuma J.J."/>
            <person name="Gonzalez C.F."/>
            <person name="Konstantinidis K."/>
            <person name="Tiedje J.M."/>
            <person name="Richardson P."/>
        </authorList>
    </citation>
    <scope>NUCLEOTIDE SEQUENCE [LARGE SCALE GENOMIC DNA]</scope>
    <source>
        <strain>HI2424</strain>
    </source>
</reference>
<accession>A0KAZ7</accession>